<accession>P37691</accession>
<accession>Q2M7S8</accession>
<evidence type="ECO:0000255" key="1"/>
<evidence type="ECO:0000305" key="2"/>
<proteinExistence type="inferred from homology"/>
<keyword id="KW-1185">Reference proteome</keyword>
<keyword id="KW-0732">Signal</keyword>
<gene>
    <name type="primary">yibQ</name>
    <name type="ordered locus">b3614</name>
    <name type="ordered locus">JW5645</name>
</gene>
<feature type="signal peptide" evidence="1">
    <location>
        <begin position="1"/>
        <end position="23"/>
    </location>
</feature>
<feature type="chain" id="PRO_0000013926" description="Uncharacterized protein YibQ">
    <location>
        <begin position="24"/>
        <end position="319"/>
    </location>
</feature>
<comment type="similarity">
    <text evidence="2">To H.influenzae HI_0755.</text>
</comment>
<comment type="sequence caution" evidence="2">
    <conflict type="erroneous initiation">
        <sequence resource="EMBL-CDS" id="AAB18591"/>
    </conflict>
    <text>Truncated N-terminus.</text>
</comment>
<protein>
    <recommendedName>
        <fullName>Uncharacterized protein YibQ</fullName>
    </recommendedName>
</protein>
<dbReference type="EMBL" id="U00039">
    <property type="protein sequence ID" value="AAB18591.1"/>
    <property type="status" value="ALT_INIT"/>
    <property type="molecule type" value="Genomic_DNA"/>
</dbReference>
<dbReference type="EMBL" id="U00096">
    <property type="protein sequence ID" value="AAC76638.2"/>
    <property type="molecule type" value="Genomic_DNA"/>
</dbReference>
<dbReference type="EMBL" id="AP009048">
    <property type="protein sequence ID" value="BAE77678.1"/>
    <property type="molecule type" value="Genomic_DNA"/>
</dbReference>
<dbReference type="PIR" id="S47835">
    <property type="entry name" value="S47835"/>
</dbReference>
<dbReference type="RefSeq" id="NP_418071.4">
    <property type="nucleotide sequence ID" value="NC_000913.3"/>
</dbReference>
<dbReference type="RefSeq" id="WP_000483847.1">
    <property type="nucleotide sequence ID" value="NZ_LN832404.1"/>
</dbReference>
<dbReference type="SMR" id="P37691"/>
<dbReference type="BioGRID" id="4263302">
    <property type="interactions" value="21"/>
</dbReference>
<dbReference type="FunCoup" id="P37691">
    <property type="interactions" value="24"/>
</dbReference>
<dbReference type="STRING" id="511145.b3614"/>
<dbReference type="jPOST" id="P37691"/>
<dbReference type="PaxDb" id="511145-b3614"/>
<dbReference type="EnsemblBacteria" id="AAC76638">
    <property type="protein sequence ID" value="AAC76638"/>
    <property type="gene ID" value="b3614"/>
</dbReference>
<dbReference type="GeneID" id="948128"/>
<dbReference type="KEGG" id="ecj:JW5645"/>
<dbReference type="KEGG" id="eco:b3614"/>
<dbReference type="KEGG" id="ecoc:C3026_19595"/>
<dbReference type="PATRIC" id="fig|1411691.4.peg.3092"/>
<dbReference type="EchoBASE" id="EB2206"/>
<dbReference type="eggNOG" id="COG2861">
    <property type="taxonomic scope" value="Bacteria"/>
</dbReference>
<dbReference type="HOGENOM" id="CLU_041643_4_0_6"/>
<dbReference type="InParanoid" id="P37691"/>
<dbReference type="OMA" id="CHPHPAT"/>
<dbReference type="OrthoDB" id="9784811at2"/>
<dbReference type="PhylomeDB" id="P37691"/>
<dbReference type="BioCyc" id="EcoCyc:EG12298-MONOMER"/>
<dbReference type="PRO" id="PR:P37691"/>
<dbReference type="Proteomes" id="UP000000625">
    <property type="component" value="Chromosome"/>
</dbReference>
<dbReference type="GO" id="GO:0005975">
    <property type="term" value="P:carbohydrate metabolic process"/>
    <property type="evidence" value="ECO:0007669"/>
    <property type="project" value="InterPro"/>
</dbReference>
<dbReference type="CDD" id="cd10936">
    <property type="entry name" value="CE4_DAC2"/>
    <property type="match status" value="1"/>
</dbReference>
<dbReference type="Gene3D" id="3.20.20.370">
    <property type="entry name" value="Glycoside hydrolase/deacetylase"/>
    <property type="match status" value="1"/>
</dbReference>
<dbReference type="InterPro" id="IPR006837">
    <property type="entry name" value="Divergent_DAC"/>
</dbReference>
<dbReference type="InterPro" id="IPR011330">
    <property type="entry name" value="Glyco_hydro/deAcase_b/a-brl"/>
</dbReference>
<dbReference type="PANTHER" id="PTHR30105:SF2">
    <property type="entry name" value="DIVERGENT POLYSACCHARIDE DEACETYLASE SUPERFAMILY"/>
    <property type="match status" value="1"/>
</dbReference>
<dbReference type="PANTHER" id="PTHR30105">
    <property type="entry name" value="UNCHARACTERIZED YIBQ-RELATED"/>
    <property type="match status" value="1"/>
</dbReference>
<dbReference type="Pfam" id="PF04748">
    <property type="entry name" value="Polysacc_deac_2"/>
    <property type="match status" value="1"/>
</dbReference>
<dbReference type="SUPFAM" id="SSF88713">
    <property type="entry name" value="Glycoside hydrolase/deacetylase"/>
    <property type="match status" value="1"/>
</dbReference>
<sequence>MFPFRRNVLAFAALLALSSPVLAGKLAIVIDDFGYRPHNENQVLAMPSAISVAVLPDSPHAREMATKAHNSGHEVLIHLPMAPLSKQPLEKNTLRPEMSSDEIERIIRSAVNNVPYAVGINNHMGSKMTSNLFGMQKVMQALERYNLYFLDSVTIGNTQAMRAAQGTGVKVIKRKVFLDDSQNEADIRVQFNRAIDLARRNGSTIAIGHPHPATVRVLQQMVYNLPPDITLVKASSLLNEPQVDTSTPPKNAVPDAPRNPFRGVKLCKPKKPIEPVYANRFFEVLSESISQSTLIVYFQHQWQGWGKQPEAAKFNASAN</sequence>
<reference key="1">
    <citation type="journal article" date="1994" name="Nucleic Acids Res.">
        <title>Analysis of the Escherichia coli genome. V. DNA sequence of the region from 76.0 to 81.5 minutes.</title>
        <authorList>
            <person name="Sofia H.J."/>
            <person name="Burland V."/>
            <person name="Daniels D.L."/>
            <person name="Plunkett G. III"/>
            <person name="Blattner F.R."/>
        </authorList>
    </citation>
    <scope>NUCLEOTIDE SEQUENCE [LARGE SCALE GENOMIC DNA]</scope>
    <source>
        <strain>K12 / MG1655 / ATCC 47076</strain>
    </source>
</reference>
<reference key="2">
    <citation type="journal article" date="1997" name="Science">
        <title>The complete genome sequence of Escherichia coli K-12.</title>
        <authorList>
            <person name="Blattner F.R."/>
            <person name="Plunkett G. III"/>
            <person name="Bloch C.A."/>
            <person name="Perna N.T."/>
            <person name="Burland V."/>
            <person name="Riley M."/>
            <person name="Collado-Vides J."/>
            <person name="Glasner J.D."/>
            <person name="Rode C.K."/>
            <person name="Mayhew G.F."/>
            <person name="Gregor J."/>
            <person name="Davis N.W."/>
            <person name="Kirkpatrick H.A."/>
            <person name="Goeden M.A."/>
            <person name="Rose D.J."/>
            <person name="Mau B."/>
            <person name="Shao Y."/>
        </authorList>
    </citation>
    <scope>NUCLEOTIDE SEQUENCE [LARGE SCALE GENOMIC DNA]</scope>
    <source>
        <strain>K12 / MG1655 / ATCC 47076</strain>
    </source>
</reference>
<reference key="3">
    <citation type="journal article" date="2006" name="Mol. Syst. Biol.">
        <title>Highly accurate genome sequences of Escherichia coli K-12 strains MG1655 and W3110.</title>
        <authorList>
            <person name="Hayashi K."/>
            <person name="Morooka N."/>
            <person name="Yamamoto Y."/>
            <person name="Fujita K."/>
            <person name="Isono K."/>
            <person name="Choi S."/>
            <person name="Ohtsubo E."/>
            <person name="Baba T."/>
            <person name="Wanner B.L."/>
            <person name="Mori H."/>
            <person name="Horiuchi T."/>
        </authorList>
    </citation>
    <scope>NUCLEOTIDE SEQUENCE [LARGE SCALE GENOMIC DNA]</scope>
    <source>
        <strain>K12 / W3110 / ATCC 27325 / DSM 5911</strain>
    </source>
</reference>
<name>YIBQ_ECOLI</name>
<organism>
    <name type="scientific">Escherichia coli (strain K12)</name>
    <dbReference type="NCBI Taxonomy" id="83333"/>
    <lineage>
        <taxon>Bacteria</taxon>
        <taxon>Pseudomonadati</taxon>
        <taxon>Pseudomonadota</taxon>
        <taxon>Gammaproteobacteria</taxon>
        <taxon>Enterobacterales</taxon>
        <taxon>Enterobacteriaceae</taxon>
        <taxon>Escherichia</taxon>
    </lineage>
</organism>